<evidence type="ECO:0000255" key="1">
    <source>
        <dbReference type="HAMAP-Rule" id="MF_00599"/>
    </source>
</evidence>
<name>FTSB_VIBC1</name>
<organism>
    <name type="scientific">Vibrio campbellii (strain ATCC BAA-1116)</name>
    <dbReference type="NCBI Taxonomy" id="2902295"/>
    <lineage>
        <taxon>Bacteria</taxon>
        <taxon>Pseudomonadati</taxon>
        <taxon>Pseudomonadota</taxon>
        <taxon>Gammaproteobacteria</taxon>
        <taxon>Vibrionales</taxon>
        <taxon>Vibrionaceae</taxon>
        <taxon>Vibrio</taxon>
    </lineage>
</organism>
<comment type="function">
    <text evidence="1">Essential cell division protein. May link together the upstream cell division proteins, which are predominantly cytoplasmic, with the downstream cell division proteins, which are predominantly periplasmic.</text>
</comment>
<comment type="subunit">
    <text evidence="1">Part of a complex composed of FtsB, FtsL and FtsQ.</text>
</comment>
<comment type="subcellular location">
    <subcellularLocation>
        <location evidence="1">Cell inner membrane</location>
        <topology evidence="1">Single-pass type II membrane protein</topology>
    </subcellularLocation>
    <text evidence="1">Localizes to the division septum.</text>
</comment>
<comment type="similarity">
    <text evidence="1">Belongs to the FtsB family.</text>
</comment>
<gene>
    <name evidence="1" type="primary">ftsB</name>
    <name type="ordered locus">VIBHAR_03524</name>
</gene>
<accession>A7MTT1</accession>
<keyword id="KW-0131">Cell cycle</keyword>
<keyword id="KW-0132">Cell division</keyword>
<keyword id="KW-0997">Cell inner membrane</keyword>
<keyword id="KW-1003">Cell membrane</keyword>
<keyword id="KW-0175">Coiled coil</keyword>
<keyword id="KW-0472">Membrane</keyword>
<keyword id="KW-0812">Transmembrane</keyword>
<keyword id="KW-1133">Transmembrane helix</keyword>
<sequence>MRIFVIALTLLFGWLQYTLWFGKNGVSDYYTVEDEIEVQQQVNSKLQARNNEMFAEIDDLRQGLDAIEERARHELGLVKDGETFYRIVDEEEH</sequence>
<proteinExistence type="inferred from homology"/>
<feature type="chain" id="PRO_1000025734" description="Cell division protein FtsB">
    <location>
        <begin position="1"/>
        <end position="93"/>
    </location>
</feature>
<feature type="topological domain" description="Cytoplasmic" evidence="1">
    <location>
        <begin position="1"/>
        <end position="3"/>
    </location>
</feature>
<feature type="transmembrane region" description="Helical" evidence="1">
    <location>
        <begin position="4"/>
        <end position="21"/>
    </location>
</feature>
<feature type="topological domain" description="Periplasmic" evidence="1">
    <location>
        <begin position="22"/>
        <end position="93"/>
    </location>
</feature>
<feature type="coiled-coil region" evidence="1">
    <location>
        <begin position="31"/>
        <end position="75"/>
    </location>
</feature>
<reference key="1">
    <citation type="submission" date="2007-08" db="EMBL/GenBank/DDBJ databases">
        <authorList>
            <consortium name="The Vibrio harveyi Genome Sequencing Project"/>
            <person name="Bassler B."/>
            <person name="Clifton S.W."/>
            <person name="Fulton L."/>
            <person name="Delehaunty K."/>
            <person name="Fronick C."/>
            <person name="Harrison M."/>
            <person name="Markivic C."/>
            <person name="Fulton R."/>
            <person name="Tin-Wollam A.-M."/>
            <person name="Shah N."/>
            <person name="Pepin K."/>
            <person name="Nash W."/>
            <person name="Thiruvilangam P."/>
            <person name="Bhonagiri V."/>
            <person name="Waters C."/>
            <person name="Tu K.C."/>
            <person name="Irgon J."/>
            <person name="Wilson R.K."/>
        </authorList>
    </citation>
    <scope>NUCLEOTIDE SEQUENCE [LARGE SCALE GENOMIC DNA]</scope>
    <source>
        <strain>ATCC BAA-1116 / BB120</strain>
    </source>
</reference>
<protein>
    <recommendedName>
        <fullName evidence="1">Cell division protein FtsB</fullName>
    </recommendedName>
</protein>
<dbReference type="EMBL" id="CP000789">
    <property type="protein sequence ID" value="ABU72460.1"/>
    <property type="molecule type" value="Genomic_DNA"/>
</dbReference>
<dbReference type="RefSeq" id="WP_005452106.1">
    <property type="nucleotide sequence ID" value="NC_022269.1"/>
</dbReference>
<dbReference type="SMR" id="A7MTT1"/>
<dbReference type="GeneID" id="83580628"/>
<dbReference type="KEGG" id="vha:VIBHAR_03524"/>
<dbReference type="PATRIC" id="fig|338187.25.peg.2686"/>
<dbReference type="Proteomes" id="UP000008152">
    <property type="component" value="Chromosome I"/>
</dbReference>
<dbReference type="GO" id="GO:0032153">
    <property type="term" value="C:cell division site"/>
    <property type="evidence" value="ECO:0007669"/>
    <property type="project" value="UniProtKB-UniRule"/>
</dbReference>
<dbReference type="GO" id="GO:0030428">
    <property type="term" value="C:cell septum"/>
    <property type="evidence" value="ECO:0007669"/>
    <property type="project" value="TreeGrafter"/>
</dbReference>
<dbReference type="GO" id="GO:0005886">
    <property type="term" value="C:plasma membrane"/>
    <property type="evidence" value="ECO:0007669"/>
    <property type="project" value="UniProtKB-SubCell"/>
</dbReference>
<dbReference type="GO" id="GO:0043093">
    <property type="term" value="P:FtsZ-dependent cytokinesis"/>
    <property type="evidence" value="ECO:0007669"/>
    <property type="project" value="UniProtKB-UniRule"/>
</dbReference>
<dbReference type="Gene3D" id="1.20.5.400">
    <property type="match status" value="1"/>
</dbReference>
<dbReference type="HAMAP" id="MF_00599">
    <property type="entry name" value="FtsB"/>
    <property type="match status" value="1"/>
</dbReference>
<dbReference type="InterPro" id="IPR023081">
    <property type="entry name" value="Cell_div_FtsB"/>
</dbReference>
<dbReference type="InterPro" id="IPR007060">
    <property type="entry name" value="FtsL/DivIC"/>
</dbReference>
<dbReference type="NCBIfam" id="NF002058">
    <property type="entry name" value="PRK00888.1"/>
    <property type="match status" value="1"/>
</dbReference>
<dbReference type="PANTHER" id="PTHR37485">
    <property type="entry name" value="CELL DIVISION PROTEIN FTSB"/>
    <property type="match status" value="1"/>
</dbReference>
<dbReference type="PANTHER" id="PTHR37485:SF1">
    <property type="entry name" value="CELL DIVISION PROTEIN FTSB"/>
    <property type="match status" value="1"/>
</dbReference>
<dbReference type="Pfam" id="PF04977">
    <property type="entry name" value="DivIC"/>
    <property type="match status" value="1"/>
</dbReference>